<gene>
    <name evidence="1" type="primary">ilvC</name>
    <name type="ordered locus">Msp_0022</name>
</gene>
<accession>Q2NI95</accession>
<feature type="chain" id="PRO_0000252802" description="Ketol-acid reductoisomerase (NADP(+))">
    <location>
        <begin position="1"/>
        <end position="330"/>
    </location>
</feature>
<feature type="domain" description="KARI N-terminal Rossmann" evidence="2">
    <location>
        <begin position="1"/>
        <end position="181"/>
    </location>
</feature>
<feature type="domain" description="KARI C-terminal knotted" evidence="3">
    <location>
        <begin position="182"/>
        <end position="327"/>
    </location>
</feature>
<feature type="active site" evidence="1">
    <location>
        <position position="107"/>
    </location>
</feature>
<feature type="binding site" evidence="1">
    <location>
        <begin position="24"/>
        <end position="27"/>
    </location>
    <ligand>
        <name>NADP(+)</name>
        <dbReference type="ChEBI" id="CHEBI:58349"/>
    </ligand>
</feature>
<feature type="binding site" evidence="1">
    <location>
        <position position="47"/>
    </location>
    <ligand>
        <name>NADP(+)</name>
        <dbReference type="ChEBI" id="CHEBI:58349"/>
    </ligand>
</feature>
<feature type="binding site" evidence="1">
    <location>
        <position position="52"/>
    </location>
    <ligand>
        <name>NADP(+)</name>
        <dbReference type="ChEBI" id="CHEBI:58349"/>
    </ligand>
</feature>
<feature type="binding site" evidence="1">
    <location>
        <begin position="82"/>
        <end position="85"/>
    </location>
    <ligand>
        <name>NADP(+)</name>
        <dbReference type="ChEBI" id="CHEBI:58349"/>
    </ligand>
</feature>
<feature type="binding site" evidence="1">
    <location>
        <position position="133"/>
    </location>
    <ligand>
        <name>NADP(+)</name>
        <dbReference type="ChEBI" id="CHEBI:58349"/>
    </ligand>
</feature>
<feature type="binding site" evidence="1">
    <location>
        <position position="190"/>
    </location>
    <ligand>
        <name>Mg(2+)</name>
        <dbReference type="ChEBI" id="CHEBI:18420"/>
        <label>1</label>
    </ligand>
</feature>
<feature type="binding site" evidence="1">
    <location>
        <position position="190"/>
    </location>
    <ligand>
        <name>Mg(2+)</name>
        <dbReference type="ChEBI" id="CHEBI:18420"/>
        <label>2</label>
    </ligand>
</feature>
<feature type="binding site" evidence="1">
    <location>
        <position position="194"/>
    </location>
    <ligand>
        <name>Mg(2+)</name>
        <dbReference type="ChEBI" id="CHEBI:18420"/>
        <label>1</label>
    </ligand>
</feature>
<feature type="binding site" evidence="1">
    <location>
        <position position="226"/>
    </location>
    <ligand>
        <name>Mg(2+)</name>
        <dbReference type="ChEBI" id="CHEBI:18420"/>
        <label>2</label>
    </ligand>
</feature>
<feature type="binding site" evidence="1">
    <location>
        <position position="230"/>
    </location>
    <ligand>
        <name>Mg(2+)</name>
        <dbReference type="ChEBI" id="CHEBI:18420"/>
        <label>2</label>
    </ligand>
</feature>
<feature type="binding site" evidence="1">
    <location>
        <position position="251"/>
    </location>
    <ligand>
        <name>substrate</name>
    </ligand>
</feature>
<proteinExistence type="inferred from homology"/>
<evidence type="ECO:0000255" key="1">
    <source>
        <dbReference type="HAMAP-Rule" id="MF_00435"/>
    </source>
</evidence>
<evidence type="ECO:0000255" key="2">
    <source>
        <dbReference type="PROSITE-ProRule" id="PRU01197"/>
    </source>
</evidence>
<evidence type="ECO:0000255" key="3">
    <source>
        <dbReference type="PROSITE-ProRule" id="PRU01198"/>
    </source>
</evidence>
<name>ILVC_METST</name>
<keyword id="KW-0028">Amino-acid biosynthesis</keyword>
<keyword id="KW-0100">Branched-chain amino acid biosynthesis</keyword>
<keyword id="KW-0460">Magnesium</keyword>
<keyword id="KW-0479">Metal-binding</keyword>
<keyword id="KW-0521">NADP</keyword>
<keyword id="KW-0560">Oxidoreductase</keyword>
<keyword id="KW-1185">Reference proteome</keyword>
<comment type="function">
    <text evidence="1">Involved in the biosynthesis of branched-chain amino acids (BCAA). Catalyzes an alkyl-migration followed by a ketol-acid reduction of (S)-2-acetolactate (S2AL) to yield (R)-2,3-dihydroxy-isovalerate. In the isomerase reaction, S2AL is rearranged via a Mg-dependent methyl migration to produce 3-hydroxy-3-methyl-2-ketobutyrate (HMKB). In the reductase reaction, this 2-ketoacid undergoes a metal-dependent reduction by NADPH to yield (R)-2,3-dihydroxy-isovalerate.</text>
</comment>
<comment type="catalytic activity">
    <reaction evidence="1">
        <text>(2R)-2,3-dihydroxy-3-methylbutanoate + NADP(+) = (2S)-2-acetolactate + NADPH + H(+)</text>
        <dbReference type="Rhea" id="RHEA:22068"/>
        <dbReference type="ChEBI" id="CHEBI:15378"/>
        <dbReference type="ChEBI" id="CHEBI:49072"/>
        <dbReference type="ChEBI" id="CHEBI:57783"/>
        <dbReference type="ChEBI" id="CHEBI:58349"/>
        <dbReference type="ChEBI" id="CHEBI:58476"/>
        <dbReference type="EC" id="1.1.1.86"/>
    </reaction>
</comment>
<comment type="catalytic activity">
    <reaction evidence="1">
        <text>(2R,3R)-2,3-dihydroxy-3-methylpentanoate + NADP(+) = (S)-2-ethyl-2-hydroxy-3-oxobutanoate + NADPH + H(+)</text>
        <dbReference type="Rhea" id="RHEA:13493"/>
        <dbReference type="ChEBI" id="CHEBI:15378"/>
        <dbReference type="ChEBI" id="CHEBI:49256"/>
        <dbReference type="ChEBI" id="CHEBI:49258"/>
        <dbReference type="ChEBI" id="CHEBI:57783"/>
        <dbReference type="ChEBI" id="CHEBI:58349"/>
        <dbReference type="EC" id="1.1.1.86"/>
    </reaction>
</comment>
<comment type="cofactor">
    <cofactor evidence="1">
        <name>Mg(2+)</name>
        <dbReference type="ChEBI" id="CHEBI:18420"/>
    </cofactor>
    <text evidence="1">Binds 2 magnesium ions per subunit.</text>
</comment>
<comment type="pathway">
    <text evidence="1">Amino-acid biosynthesis; L-isoleucine biosynthesis; L-isoleucine from 2-oxobutanoate: step 2/4.</text>
</comment>
<comment type="pathway">
    <text evidence="1">Amino-acid biosynthesis; L-valine biosynthesis; L-valine from pyruvate: step 2/4.</text>
</comment>
<comment type="similarity">
    <text evidence="1">Belongs to the ketol-acid reductoisomerase family.</text>
</comment>
<dbReference type="EC" id="1.1.1.86" evidence="1"/>
<dbReference type="EMBL" id="CP000102">
    <property type="protein sequence ID" value="ABC56441.1"/>
    <property type="molecule type" value="Genomic_DNA"/>
</dbReference>
<dbReference type="RefSeq" id="WP_011405640.1">
    <property type="nucleotide sequence ID" value="NC_007681.1"/>
</dbReference>
<dbReference type="SMR" id="Q2NI95"/>
<dbReference type="STRING" id="339860.Msp_0022"/>
<dbReference type="GeneID" id="41324595"/>
<dbReference type="KEGG" id="mst:Msp_0022"/>
<dbReference type="eggNOG" id="arCOG04465">
    <property type="taxonomic scope" value="Archaea"/>
</dbReference>
<dbReference type="HOGENOM" id="CLU_033821_0_1_2"/>
<dbReference type="OrthoDB" id="6064at2157"/>
<dbReference type="UniPathway" id="UPA00047">
    <property type="reaction ID" value="UER00056"/>
</dbReference>
<dbReference type="UniPathway" id="UPA00049">
    <property type="reaction ID" value="UER00060"/>
</dbReference>
<dbReference type="Proteomes" id="UP000001931">
    <property type="component" value="Chromosome"/>
</dbReference>
<dbReference type="GO" id="GO:0004455">
    <property type="term" value="F:ketol-acid reductoisomerase activity"/>
    <property type="evidence" value="ECO:0007669"/>
    <property type="project" value="UniProtKB-UniRule"/>
</dbReference>
<dbReference type="GO" id="GO:0000287">
    <property type="term" value="F:magnesium ion binding"/>
    <property type="evidence" value="ECO:0007669"/>
    <property type="project" value="UniProtKB-UniRule"/>
</dbReference>
<dbReference type="GO" id="GO:0050661">
    <property type="term" value="F:NADP binding"/>
    <property type="evidence" value="ECO:0007669"/>
    <property type="project" value="InterPro"/>
</dbReference>
<dbReference type="GO" id="GO:0009097">
    <property type="term" value="P:isoleucine biosynthetic process"/>
    <property type="evidence" value="ECO:0007669"/>
    <property type="project" value="UniProtKB-UniRule"/>
</dbReference>
<dbReference type="GO" id="GO:0009099">
    <property type="term" value="P:L-valine biosynthetic process"/>
    <property type="evidence" value="ECO:0007669"/>
    <property type="project" value="UniProtKB-UniRule"/>
</dbReference>
<dbReference type="FunFam" id="3.40.50.720:FF:000023">
    <property type="entry name" value="Ketol-acid reductoisomerase (NADP(+))"/>
    <property type="match status" value="1"/>
</dbReference>
<dbReference type="Gene3D" id="6.10.240.10">
    <property type="match status" value="1"/>
</dbReference>
<dbReference type="Gene3D" id="3.40.50.720">
    <property type="entry name" value="NAD(P)-binding Rossmann-like Domain"/>
    <property type="match status" value="1"/>
</dbReference>
<dbReference type="HAMAP" id="MF_00435">
    <property type="entry name" value="IlvC"/>
    <property type="match status" value="1"/>
</dbReference>
<dbReference type="InterPro" id="IPR008927">
    <property type="entry name" value="6-PGluconate_DH-like_C_sf"/>
</dbReference>
<dbReference type="InterPro" id="IPR013023">
    <property type="entry name" value="KARI"/>
</dbReference>
<dbReference type="InterPro" id="IPR000506">
    <property type="entry name" value="KARI_C"/>
</dbReference>
<dbReference type="InterPro" id="IPR013116">
    <property type="entry name" value="KARI_N"/>
</dbReference>
<dbReference type="InterPro" id="IPR014359">
    <property type="entry name" value="KARI_prok"/>
</dbReference>
<dbReference type="InterPro" id="IPR036291">
    <property type="entry name" value="NAD(P)-bd_dom_sf"/>
</dbReference>
<dbReference type="NCBIfam" id="TIGR00465">
    <property type="entry name" value="ilvC"/>
    <property type="match status" value="1"/>
</dbReference>
<dbReference type="NCBIfam" id="NF004017">
    <property type="entry name" value="PRK05479.1"/>
    <property type="match status" value="1"/>
</dbReference>
<dbReference type="PANTHER" id="PTHR21371">
    <property type="entry name" value="KETOL-ACID REDUCTOISOMERASE, MITOCHONDRIAL"/>
    <property type="match status" value="1"/>
</dbReference>
<dbReference type="PANTHER" id="PTHR21371:SF1">
    <property type="entry name" value="KETOL-ACID REDUCTOISOMERASE, MITOCHONDRIAL"/>
    <property type="match status" value="1"/>
</dbReference>
<dbReference type="Pfam" id="PF01450">
    <property type="entry name" value="KARI_C"/>
    <property type="match status" value="1"/>
</dbReference>
<dbReference type="Pfam" id="PF07991">
    <property type="entry name" value="KARI_N"/>
    <property type="match status" value="1"/>
</dbReference>
<dbReference type="PIRSF" id="PIRSF000116">
    <property type="entry name" value="IlvC_gammaproteo"/>
    <property type="match status" value="1"/>
</dbReference>
<dbReference type="SUPFAM" id="SSF48179">
    <property type="entry name" value="6-phosphogluconate dehydrogenase C-terminal domain-like"/>
    <property type="match status" value="1"/>
</dbReference>
<dbReference type="SUPFAM" id="SSF51735">
    <property type="entry name" value="NAD(P)-binding Rossmann-fold domains"/>
    <property type="match status" value="1"/>
</dbReference>
<dbReference type="PROSITE" id="PS51851">
    <property type="entry name" value="KARI_C"/>
    <property type="match status" value="1"/>
</dbReference>
<dbReference type="PROSITE" id="PS51850">
    <property type="entry name" value="KARI_N"/>
    <property type="match status" value="1"/>
</dbReference>
<protein>
    <recommendedName>
        <fullName evidence="1">Ketol-acid reductoisomerase (NADP(+))</fullName>
        <shortName evidence="1">KARI</shortName>
        <ecNumber evidence="1">1.1.1.86</ecNumber>
    </recommendedName>
    <alternativeName>
        <fullName evidence="1">Acetohydroxy-acid isomeroreductase</fullName>
        <shortName evidence="1">AHIR</shortName>
    </alternativeName>
    <alternativeName>
        <fullName evidence="1">Alpha-keto-beta-hydroxylacyl reductoisomerase</fullName>
    </alternativeName>
    <alternativeName>
        <fullName evidence="1">Ketol-acid reductoisomerase type 1</fullName>
    </alternativeName>
    <alternativeName>
        <fullName evidence="1">Ketol-acid reductoisomerase type I</fullName>
    </alternativeName>
</protein>
<organism>
    <name type="scientific">Methanosphaera stadtmanae (strain ATCC 43021 / DSM 3091 / JCM 11832 / MCB-3)</name>
    <dbReference type="NCBI Taxonomy" id="339860"/>
    <lineage>
        <taxon>Archaea</taxon>
        <taxon>Methanobacteriati</taxon>
        <taxon>Methanobacteriota</taxon>
        <taxon>Methanomada group</taxon>
        <taxon>Methanobacteria</taxon>
        <taxon>Methanobacteriales</taxon>
        <taxon>Methanobacteriaceae</taxon>
        <taxon>Methanosphaera</taxon>
    </lineage>
</organism>
<reference key="1">
    <citation type="journal article" date="2006" name="J. Bacteriol.">
        <title>The genome sequence of Methanosphaera stadtmanae reveals why this human intestinal archaeon is restricted to methanol and H2 for methane formation and ATP synthesis.</title>
        <authorList>
            <person name="Fricke W.F."/>
            <person name="Seedorf H."/>
            <person name="Henne A."/>
            <person name="Kruer M."/>
            <person name="Liesegang H."/>
            <person name="Hedderich R."/>
            <person name="Gottschalk G."/>
            <person name="Thauer R.K."/>
        </authorList>
    </citation>
    <scope>NUCLEOTIDE SEQUENCE [LARGE SCALE GENOMIC DNA]</scope>
    <source>
        <strain>ATCC 43021 / DSM 3091 / JCM 11832 / MCB-3</strain>
    </source>
</reference>
<sequence>MKVLYDDDVNTNVLENKTIAVIGYGSQGRGQSLNMHDSGLNVIVGLREGGKSWKKAQEDGLTVKTIEDASKEADIIHILIPDEIQKTVYENQIQQYVEPGNTISFSHGYNIHFNRIRVPEDVNVTMIAPKAPGSKVRQTYQEGFGTPGLIAIEQDATGDAYDIAIEMAKAVGLTRAGVIETTYREETETDLFGEQAVLCGGLTGLIQAGFETLVEAGYKPEMAYFETCHEMKLIVDLIYEKGFGNMWHDVSNTAEFGGLTRRDRVITEESKENMKKILREIQDGTFATEFAVDADTSYPKLLTQRRLEGEKQIEKVGKNLRIACGLQKEE</sequence>